<protein>
    <recommendedName>
        <fullName evidence="5">Delta(6)-protoilludene synthase HYPSUDRAFT_138665</fullName>
        <ecNumber evidence="4">4.2.3.135</ecNumber>
    </recommendedName>
    <alternativeName>
        <fullName evidence="5">Sesquiterpene synthase HYPSUDRAFT_138665</fullName>
    </alternativeName>
    <alternativeName>
        <fullName evidence="5">Terpene cyclase HYPSUDRAFT_138665</fullName>
    </alternativeName>
</protein>
<feature type="chain" id="PRO_0000451271" description="Delta(6)-protoilludene synthase HYPSUDRAFT_138665">
    <location>
        <begin position="1"/>
        <end position="327"/>
    </location>
</feature>
<feature type="short sequence motif" description="DDXXD motif" evidence="2">
    <location>
        <begin position="79"/>
        <end position="83"/>
    </location>
</feature>
<feature type="binding site" evidence="3">
    <location>
        <position position="79"/>
    </location>
    <ligand>
        <name>Mg(2+)</name>
        <dbReference type="ChEBI" id="CHEBI:18420"/>
        <label>1</label>
    </ligand>
</feature>
<feature type="binding site" evidence="3">
    <location>
        <position position="79"/>
    </location>
    <ligand>
        <name>Mg(2+)</name>
        <dbReference type="ChEBI" id="CHEBI:18420"/>
        <label>2</label>
    </ligand>
</feature>
<feature type="binding site" evidence="3">
    <location>
        <position position="215"/>
    </location>
    <ligand>
        <name>Mg(2+)</name>
        <dbReference type="ChEBI" id="CHEBI:18420"/>
        <label>3</label>
    </ligand>
</feature>
<feature type="binding site" evidence="3">
    <location>
        <position position="219"/>
    </location>
    <ligand>
        <name>Mg(2+)</name>
        <dbReference type="ChEBI" id="CHEBI:18420"/>
        <label>3</label>
    </ligand>
</feature>
<feature type="binding site" evidence="3">
    <location>
        <position position="223"/>
    </location>
    <ligand>
        <name>Mg(2+)</name>
        <dbReference type="ChEBI" id="CHEBI:18420"/>
        <label>3</label>
    </ligand>
</feature>
<feature type="binding site" evidence="3">
    <location>
        <position position="304"/>
    </location>
    <ligand>
        <name>(2E,6E)-farnesyl diphosphate</name>
        <dbReference type="ChEBI" id="CHEBI:175763"/>
    </ligand>
</feature>
<feature type="binding site" evidence="3">
    <location>
        <position position="305"/>
    </location>
    <ligand>
        <name>(2E,6E)-farnesyl diphosphate</name>
        <dbReference type="ChEBI" id="CHEBI:175763"/>
    </ligand>
</feature>
<feature type="site" description="Plays a critical role in the stabilization of intermediate cation" evidence="1">
    <location>
        <position position="76"/>
    </location>
</feature>
<gene>
    <name type="ORF">HYPSUDRAFT_138665</name>
</gene>
<evidence type="ECO:0000250" key="1">
    <source>
        <dbReference type="UniProtKB" id="B5HDJ6"/>
    </source>
</evidence>
<evidence type="ECO:0000250" key="2">
    <source>
        <dbReference type="UniProtKB" id="P0DL13"/>
    </source>
</evidence>
<evidence type="ECO:0000250" key="3">
    <source>
        <dbReference type="UniProtKB" id="Q9UR08"/>
    </source>
</evidence>
<evidence type="ECO:0000269" key="4">
    <source>
    </source>
</evidence>
<evidence type="ECO:0000303" key="5">
    <source>
    </source>
</evidence>
<evidence type="ECO:0000305" key="6"/>
<sequence>MALSNSNSTTATVTLPDTLRFWPWQRHINPHYSACKKASSEWCESFKAFSPQAQRAFNKCDFNGCRIGCDLMNLFFIIDEHTDIASAETARTQANIIMEAIRDPEMPRSENEWVGGKAAQQFWLNATKSATPSAHRRFIDAFQMYMDAVVQQAADRSKNYVRDIDDYFVVRRDTIGAKPSFAICELYLNLPDSVMEHPVIMKLTELCIDVIIIGNDLCSYKVEHEHGDDGHNLITVVMNQFKITPQEAMNYISDLHDKLAVQFLDEWKNIPTFGGPLDLEVRTYCHGLGNWVRANDSWSFESERYFGKRGIEIQTTRQIEMNIQSHL</sequence>
<comment type="function">
    <text evidence="4">Terpene cyclase that catalyzes the cyclization of farnesyl diphosphate (FPP) to delta(6)-protoilludene.</text>
</comment>
<comment type="catalytic activity">
    <reaction evidence="4">
        <text>(2E,6E)-farnesyl diphosphate = Delta(6)-protoilludene + diphosphate</text>
        <dbReference type="Rhea" id="RHEA:34695"/>
        <dbReference type="ChEBI" id="CHEBI:33019"/>
        <dbReference type="ChEBI" id="CHEBI:68655"/>
        <dbReference type="ChEBI" id="CHEBI:175763"/>
        <dbReference type="EC" id="4.2.3.135"/>
    </reaction>
    <physiologicalReaction direction="left-to-right" evidence="4">
        <dbReference type="Rhea" id="RHEA:34696"/>
    </physiologicalReaction>
</comment>
<comment type="cofactor">
    <cofactor evidence="4">
        <name>Mg(2+)</name>
        <dbReference type="ChEBI" id="CHEBI:18420"/>
    </cofactor>
</comment>
<comment type="domain">
    <text evidence="4">The DDXXD motif is important for the catalytic activity, presumably through binding to Mg(2+).</text>
</comment>
<comment type="similarity">
    <text evidence="6">Belongs to the terpene synthase family.</text>
</comment>
<name>PROS_HYPSF</name>
<dbReference type="EC" id="4.2.3.135" evidence="4"/>
<dbReference type="EMBL" id="KN817547">
    <property type="protein sequence ID" value="KJA22852.1"/>
    <property type="molecule type" value="Genomic_DNA"/>
</dbReference>
<dbReference type="SMR" id="A0A0D2L718"/>
<dbReference type="OMA" id="ESRFMEN"/>
<dbReference type="OrthoDB" id="6486656at2759"/>
<dbReference type="Proteomes" id="UP000054270">
    <property type="component" value="Unassembled WGS sequence"/>
</dbReference>
<dbReference type="GO" id="GO:0046872">
    <property type="term" value="F:metal ion binding"/>
    <property type="evidence" value="ECO:0007669"/>
    <property type="project" value="UniProtKB-KW"/>
</dbReference>
<dbReference type="GO" id="GO:0010333">
    <property type="term" value="F:terpene synthase activity"/>
    <property type="evidence" value="ECO:0007669"/>
    <property type="project" value="InterPro"/>
</dbReference>
<dbReference type="GO" id="GO:0008299">
    <property type="term" value="P:isoprenoid biosynthetic process"/>
    <property type="evidence" value="ECO:0007669"/>
    <property type="project" value="UniProtKB-ARBA"/>
</dbReference>
<dbReference type="Gene3D" id="1.10.600.10">
    <property type="entry name" value="Farnesyl Diphosphate Synthase"/>
    <property type="match status" value="1"/>
</dbReference>
<dbReference type="InterPro" id="IPR008949">
    <property type="entry name" value="Isoprenoid_synthase_dom_sf"/>
</dbReference>
<dbReference type="InterPro" id="IPR034686">
    <property type="entry name" value="Terpene_cyclase-like_2"/>
</dbReference>
<dbReference type="PANTHER" id="PTHR35201:SF4">
    <property type="entry name" value="BETA-PINACENE SYNTHASE-RELATED"/>
    <property type="match status" value="1"/>
</dbReference>
<dbReference type="PANTHER" id="PTHR35201">
    <property type="entry name" value="TERPENE SYNTHASE"/>
    <property type="match status" value="1"/>
</dbReference>
<dbReference type="Pfam" id="PF19086">
    <property type="entry name" value="Terpene_syn_C_2"/>
    <property type="match status" value="1"/>
</dbReference>
<dbReference type="SFLD" id="SFLDS00005">
    <property type="entry name" value="Isoprenoid_Synthase_Type_I"/>
    <property type="match status" value="1"/>
</dbReference>
<dbReference type="SFLD" id="SFLDG01020">
    <property type="entry name" value="Terpene_Cyclase_Like_2"/>
    <property type="match status" value="1"/>
</dbReference>
<dbReference type="SUPFAM" id="SSF48576">
    <property type="entry name" value="Terpenoid synthases"/>
    <property type="match status" value="1"/>
</dbReference>
<proteinExistence type="evidence at protein level"/>
<keyword id="KW-0456">Lyase</keyword>
<keyword id="KW-0460">Magnesium</keyword>
<keyword id="KW-0479">Metal-binding</keyword>
<keyword id="KW-1185">Reference proteome</keyword>
<reference key="1">
    <citation type="submission" date="2014-04" db="EMBL/GenBank/DDBJ databases">
        <title>Evolutionary Origins and Diversification of the Mycorrhizal Mutualists.</title>
        <authorList>
            <consortium name="DOE Joint Genome Institute"/>
            <consortium name="Mycorrhizal Genomics Consortium"/>
            <person name="Kohler A."/>
            <person name="Kuo A."/>
            <person name="Nagy L.G."/>
            <person name="Floudas D."/>
            <person name="Copeland A."/>
            <person name="Barry K.W."/>
            <person name="Cichocki N."/>
            <person name="Veneault-Fourrey C."/>
            <person name="LaButti K."/>
            <person name="Lindquist E.A."/>
            <person name="Lipzen A."/>
            <person name="Lundell T."/>
            <person name="Morin E."/>
            <person name="Murat C."/>
            <person name="Riley R."/>
            <person name="Ohm R."/>
            <person name="Sun H."/>
            <person name="Tunlid A."/>
            <person name="Henrissat B."/>
            <person name="Grigoriev I.V."/>
            <person name="Hibbett D.S."/>
            <person name="Martin F."/>
        </authorList>
    </citation>
    <scope>NUCLEOTIDE SEQUENCE [LARGE SCALE GENOMIC DNA]</scope>
    <source>
        <strain>FD-334 SS-4</strain>
    </source>
</reference>
<reference key="2">
    <citation type="journal article" date="2020" name="ACS Chem. Biol.">
        <title>Agrocybe aegerita serves as a gateway for identifying sesquiterpene biosynthetic enzymes in higher fungi.</title>
        <authorList>
            <person name="Zhang C."/>
            <person name="Chen X."/>
            <person name="Orban A."/>
            <person name="Shukal S."/>
            <person name="Birk F."/>
            <person name="Too H.P."/>
            <person name="Ruehl M."/>
        </authorList>
    </citation>
    <scope>FUNCTION</scope>
    <scope>DOMAIN</scope>
    <scope>CATALYTIC ACTIVITY</scope>
</reference>
<accession>A0A0D2L718</accession>
<organism>
    <name type="scientific">Hypholoma sublateritium (strain FD-334 SS-4)</name>
    <dbReference type="NCBI Taxonomy" id="945553"/>
    <lineage>
        <taxon>Eukaryota</taxon>
        <taxon>Fungi</taxon>
        <taxon>Dikarya</taxon>
        <taxon>Basidiomycota</taxon>
        <taxon>Agaricomycotina</taxon>
        <taxon>Agaricomycetes</taxon>
        <taxon>Agaricomycetidae</taxon>
        <taxon>Agaricales</taxon>
        <taxon>Agaricineae</taxon>
        <taxon>Strophariaceae</taxon>
        <taxon>Hypholoma</taxon>
    </lineage>
</organism>